<accession>Q0HN86</accession>
<dbReference type="EC" id="2.1.1.-" evidence="1"/>
<dbReference type="EMBL" id="CP000446">
    <property type="protein sequence ID" value="ABI37481.1"/>
    <property type="molecule type" value="Genomic_DNA"/>
</dbReference>
<dbReference type="RefSeq" id="WP_011621206.1">
    <property type="nucleotide sequence ID" value="NC_008321.1"/>
</dbReference>
<dbReference type="SMR" id="Q0HN86"/>
<dbReference type="KEGG" id="she:Shewmr4_0401"/>
<dbReference type="HOGENOM" id="CLU_049382_4_1_6"/>
<dbReference type="GO" id="GO:0005829">
    <property type="term" value="C:cytosol"/>
    <property type="evidence" value="ECO:0007669"/>
    <property type="project" value="TreeGrafter"/>
</dbReference>
<dbReference type="GO" id="GO:0016279">
    <property type="term" value="F:protein-lysine N-methyltransferase activity"/>
    <property type="evidence" value="ECO:0007669"/>
    <property type="project" value="TreeGrafter"/>
</dbReference>
<dbReference type="GO" id="GO:0032259">
    <property type="term" value="P:methylation"/>
    <property type="evidence" value="ECO:0007669"/>
    <property type="project" value="UniProtKB-KW"/>
</dbReference>
<dbReference type="CDD" id="cd02440">
    <property type="entry name" value="AdoMet_MTases"/>
    <property type="match status" value="1"/>
</dbReference>
<dbReference type="Gene3D" id="3.40.50.150">
    <property type="entry name" value="Vaccinia Virus protein VP39"/>
    <property type="match status" value="1"/>
</dbReference>
<dbReference type="HAMAP" id="MF_00735">
    <property type="entry name" value="Methyltr_PrmA"/>
    <property type="match status" value="1"/>
</dbReference>
<dbReference type="InterPro" id="IPR050078">
    <property type="entry name" value="Ribosomal_L11_MeTrfase_PrmA"/>
</dbReference>
<dbReference type="InterPro" id="IPR004498">
    <property type="entry name" value="Ribosomal_PrmA_MeTrfase"/>
</dbReference>
<dbReference type="InterPro" id="IPR029063">
    <property type="entry name" value="SAM-dependent_MTases_sf"/>
</dbReference>
<dbReference type="NCBIfam" id="TIGR00406">
    <property type="entry name" value="prmA"/>
    <property type="match status" value="1"/>
</dbReference>
<dbReference type="PANTHER" id="PTHR43648">
    <property type="entry name" value="ELECTRON TRANSFER FLAVOPROTEIN BETA SUBUNIT LYSINE METHYLTRANSFERASE"/>
    <property type="match status" value="1"/>
</dbReference>
<dbReference type="PANTHER" id="PTHR43648:SF1">
    <property type="entry name" value="ELECTRON TRANSFER FLAVOPROTEIN BETA SUBUNIT LYSINE METHYLTRANSFERASE"/>
    <property type="match status" value="1"/>
</dbReference>
<dbReference type="Pfam" id="PF06325">
    <property type="entry name" value="PrmA"/>
    <property type="match status" value="1"/>
</dbReference>
<dbReference type="PIRSF" id="PIRSF000401">
    <property type="entry name" value="RPL11_MTase"/>
    <property type="match status" value="1"/>
</dbReference>
<dbReference type="SUPFAM" id="SSF53335">
    <property type="entry name" value="S-adenosyl-L-methionine-dependent methyltransferases"/>
    <property type="match status" value="1"/>
</dbReference>
<proteinExistence type="inferred from homology"/>
<comment type="function">
    <text evidence="1">Methylates ribosomal protein L11.</text>
</comment>
<comment type="catalytic activity">
    <reaction evidence="1">
        <text>L-lysyl-[protein] + 3 S-adenosyl-L-methionine = N(6),N(6),N(6)-trimethyl-L-lysyl-[protein] + 3 S-adenosyl-L-homocysteine + 3 H(+)</text>
        <dbReference type="Rhea" id="RHEA:54192"/>
        <dbReference type="Rhea" id="RHEA-COMP:9752"/>
        <dbReference type="Rhea" id="RHEA-COMP:13826"/>
        <dbReference type="ChEBI" id="CHEBI:15378"/>
        <dbReference type="ChEBI" id="CHEBI:29969"/>
        <dbReference type="ChEBI" id="CHEBI:57856"/>
        <dbReference type="ChEBI" id="CHEBI:59789"/>
        <dbReference type="ChEBI" id="CHEBI:61961"/>
    </reaction>
</comment>
<comment type="subcellular location">
    <subcellularLocation>
        <location evidence="1">Cytoplasm</location>
    </subcellularLocation>
</comment>
<comment type="similarity">
    <text evidence="1">Belongs to the methyltransferase superfamily. PrmA family.</text>
</comment>
<organism>
    <name type="scientific">Shewanella sp. (strain MR-4)</name>
    <dbReference type="NCBI Taxonomy" id="60480"/>
    <lineage>
        <taxon>Bacteria</taxon>
        <taxon>Pseudomonadati</taxon>
        <taxon>Pseudomonadota</taxon>
        <taxon>Gammaproteobacteria</taxon>
        <taxon>Alteromonadales</taxon>
        <taxon>Shewanellaceae</taxon>
        <taxon>Shewanella</taxon>
    </lineage>
</organism>
<sequence length="293" mass="32575">MPWIQLRINTNSDDAETISDLLMEEGAVSITFEDGKDTPIFEPKLGETPLWQDTVVVALFEADTDLAPTIEMLKTLPFLGEHFSHKIEQIEDKDWVREWMDNYHPIQFGKRLWICPSWREVPDPSAVNVILDPGLAFGTGTHPTTALCLEWLDSLDLSNEEVIDFGCGSGILAVAALKLGAKKVTGIDIDYQAIEASKANAERNDVADQLALYLPEDQPADLKADVLVANILAGPLRELAPLIAERVKSGGKLALSGLLKEQAQEISDFYSQWFDMDEAAHKEDWSRLTGKRK</sequence>
<reference key="1">
    <citation type="submission" date="2006-08" db="EMBL/GenBank/DDBJ databases">
        <title>Complete sequence of Shewanella sp. MR-4.</title>
        <authorList>
            <consortium name="US DOE Joint Genome Institute"/>
            <person name="Copeland A."/>
            <person name="Lucas S."/>
            <person name="Lapidus A."/>
            <person name="Barry K."/>
            <person name="Detter J.C."/>
            <person name="Glavina del Rio T."/>
            <person name="Hammon N."/>
            <person name="Israni S."/>
            <person name="Dalin E."/>
            <person name="Tice H."/>
            <person name="Pitluck S."/>
            <person name="Kiss H."/>
            <person name="Brettin T."/>
            <person name="Bruce D."/>
            <person name="Han C."/>
            <person name="Tapia R."/>
            <person name="Gilna P."/>
            <person name="Schmutz J."/>
            <person name="Larimer F."/>
            <person name="Land M."/>
            <person name="Hauser L."/>
            <person name="Kyrpides N."/>
            <person name="Mikhailova N."/>
            <person name="Nealson K."/>
            <person name="Konstantinidis K."/>
            <person name="Klappenbach J."/>
            <person name="Tiedje J."/>
            <person name="Richardson P."/>
        </authorList>
    </citation>
    <scope>NUCLEOTIDE SEQUENCE [LARGE SCALE GENOMIC DNA]</scope>
    <source>
        <strain>MR-4</strain>
    </source>
</reference>
<evidence type="ECO:0000255" key="1">
    <source>
        <dbReference type="HAMAP-Rule" id="MF_00735"/>
    </source>
</evidence>
<feature type="chain" id="PRO_1000046091" description="Ribosomal protein L11 methyltransferase">
    <location>
        <begin position="1"/>
        <end position="293"/>
    </location>
</feature>
<feature type="binding site" evidence="1">
    <location>
        <position position="145"/>
    </location>
    <ligand>
        <name>S-adenosyl-L-methionine</name>
        <dbReference type="ChEBI" id="CHEBI:59789"/>
    </ligand>
</feature>
<feature type="binding site" evidence="1">
    <location>
        <position position="166"/>
    </location>
    <ligand>
        <name>S-adenosyl-L-methionine</name>
        <dbReference type="ChEBI" id="CHEBI:59789"/>
    </ligand>
</feature>
<feature type="binding site" evidence="1">
    <location>
        <position position="188"/>
    </location>
    <ligand>
        <name>S-adenosyl-L-methionine</name>
        <dbReference type="ChEBI" id="CHEBI:59789"/>
    </ligand>
</feature>
<feature type="binding site" evidence="1">
    <location>
        <position position="230"/>
    </location>
    <ligand>
        <name>S-adenosyl-L-methionine</name>
        <dbReference type="ChEBI" id="CHEBI:59789"/>
    </ligand>
</feature>
<name>PRMA_SHESM</name>
<keyword id="KW-0963">Cytoplasm</keyword>
<keyword id="KW-0489">Methyltransferase</keyword>
<keyword id="KW-0949">S-adenosyl-L-methionine</keyword>
<keyword id="KW-0808">Transferase</keyword>
<protein>
    <recommendedName>
        <fullName evidence="1">Ribosomal protein L11 methyltransferase</fullName>
        <shortName evidence="1">L11 Mtase</shortName>
        <ecNumber evidence="1">2.1.1.-</ecNumber>
    </recommendedName>
</protein>
<gene>
    <name evidence="1" type="primary">prmA</name>
    <name type="ordered locus">Shewmr4_0401</name>
</gene>